<keyword id="KW-0997">Cell inner membrane</keyword>
<keyword id="KW-1003">Cell membrane</keyword>
<keyword id="KW-0472">Membrane</keyword>
<keyword id="KW-1185">Reference proteome</keyword>
<name>YIDD_CYTH3</name>
<reference key="1">
    <citation type="journal article" date="2007" name="Appl. Environ. Microbiol.">
        <title>Genome sequence of the cellulolytic gliding bacterium Cytophaga hutchinsonii.</title>
        <authorList>
            <person name="Xie G."/>
            <person name="Bruce D.C."/>
            <person name="Challacombe J.F."/>
            <person name="Chertkov O."/>
            <person name="Detter J.C."/>
            <person name="Gilna P."/>
            <person name="Han C.S."/>
            <person name="Lucas S."/>
            <person name="Misra M."/>
            <person name="Myers G.L."/>
            <person name="Richardson P."/>
            <person name="Tapia R."/>
            <person name="Thayer N."/>
            <person name="Thompson L.S."/>
            <person name="Brettin T.S."/>
            <person name="Henrissat B."/>
            <person name="Wilson D.B."/>
            <person name="McBride M.J."/>
        </authorList>
    </citation>
    <scope>NUCLEOTIDE SEQUENCE [LARGE SCALE GENOMIC DNA]</scope>
    <source>
        <strain>ATCC 33406 / DSM 1761 / JCM 20678 / CIP 103989 / IAM 12607 / NBRC 15051 / NCIMB 9469 / D465</strain>
    </source>
</reference>
<sequence length="79" mass="8809">MNKKEFFTGAVKQVFIIPVKIYQYSISPLLPGACRYTPTCSEYCVQAIEKYGPLKGIWLGTKRICSCNPWGGSGYDPVP</sequence>
<feature type="chain" id="PRO_1000013088" description="Putative membrane protein insertion efficiency factor">
    <location>
        <begin position="1"/>
        <end position="79"/>
    </location>
</feature>
<gene>
    <name type="ordered locus">CHU_2420</name>
</gene>
<protein>
    <recommendedName>
        <fullName evidence="1">Putative membrane protein insertion efficiency factor</fullName>
    </recommendedName>
</protein>
<proteinExistence type="inferred from homology"/>
<dbReference type="EMBL" id="CP000383">
    <property type="protein sequence ID" value="ABG59676.1"/>
    <property type="molecule type" value="Genomic_DNA"/>
</dbReference>
<dbReference type="RefSeq" id="WP_011585790.1">
    <property type="nucleotide sequence ID" value="NC_008255.1"/>
</dbReference>
<dbReference type="STRING" id="269798.CHU_2420"/>
<dbReference type="KEGG" id="chu:CHU_2420"/>
<dbReference type="eggNOG" id="COG0759">
    <property type="taxonomic scope" value="Bacteria"/>
</dbReference>
<dbReference type="HOGENOM" id="CLU_144811_6_1_10"/>
<dbReference type="OrthoDB" id="9801753at2"/>
<dbReference type="Proteomes" id="UP000001822">
    <property type="component" value="Chromosome"/>
</dbReference>
<dbReference type="GO" id="GO:0005886">
    <property type="term" value="C:plasma membrane"/>
    <property type="evidence" value="ECO:0007669"/>
    <property type="project" value="UniProtKB-SubCell"/>
</dbReference>
<dbReference type="HAMAP" id="MF_00386">
    <property type="entry name" value="UPF0161_YidD"/>
    <property type="match status" value="1"/>
</dbReference>
<dbReference type="InterPro" id="IPR002696">
    <property type="entry name" value="Membr_insert_effic_factor_YidD"/>
</dbReference>
<dbReference type="NCBIfam" id="TIGR00278">
    <property type="entry name" value="membrane protein insertion efficiency factor YidD"/>
    <property type="match status" value="1"/>
</dbReference>
<dbReference type="PANTHER" id="PTHR33383">
    <property type="entry name" value="MEMBRANE PROTEIN INSERTION EFFICIENCY FACTOR-RELATED"/>
    <property type="match status" value="1"/>
</dbReference>
<dbReference type="PANTHER" id="PTHR33383:SF1">
    <property type="entry name" value="MEMBRANE PROTEIN INSERTION EFFICIENCY FACTOR-RELATED"/>
    <property type="match status" value="1"/>
</dbReference>
<dbReference type="Pfam" id="PF01809">
    <property type="entry name" value="YidD"/>
    <property type="match status" value="1"/>
</dbReference>
<dbReference type="SMART" id="SM01234">
    <property type="entry name" value="Haemolytic"/>
    <property type="match status" value="1"/>
</dbReference>
<accession>Q11SD8</accession>
<comment type="function">
    <text evidence="1">Could be involved in insertion of integral membrane proteins into the membrane.</text>
</comment>
<comment type="subcellular location">
    <subcellularLocation>
        <location evidence="1">Cell inner membrane</location>
        <topology evidence="1">Peripheral membrane protein</topology>
        <orientation evidence="1">Cytoplasmic side</orientation>
    </subcellularLocation>
</comment>
<comment type="similarity">
    <text evidence="1">Belongs to the UPF0161 family.</text>
</comment>
<organism>
    <name type="scientific">Cytophaga hutchinsonii (strain ATCC 33406 / DSM 1761 / CIP 103989 / NBRC 15051 / NCIMB 9469 / D465)</name>
    <dbReference type="NCBI Taxonomy" id="269798"/>
    <lineage>
        <taxon>Bacteria</taxon>
        <taxon>Pseudomonadati</taxon>
        <taxon>Bacteroidota</taxon>
        <taxon>Cytophagia</taxon>
        <taxon>Cytophagales</taxon>
        <taxon>Cytophagaceae</taxon>
        <taxon>Cytophaga</taxon>
    </lineage>
</organism>
<evidence type="ECO:0000255" key="1">
    <source>
        <dbReference type="HAMAP-Rule" id="MF_00386"/>
    </source>
</evidence>